<comment type="function">
    <text evidence="2 3">Involved in the biosynthesis of (1-&gt;6)-beta-D-glucan polymers of the cell wall. Required for viability. Involved in maintaining chromosome stability.</text>
</comment>
<comment type="subunit">
    <text evidence="2">Interacts with KRE6.</text>
</comment>
<comment type="subcellular location">
    <subcellularLocation>
        <location evidence="2">Endoplasmic reticulum membrane</location>
        <topology evidence="2">Multi-pass membrane protein</topology>
    </subcellularLocation>
</comment>
<keyword id="KW-0961">Cell wall biogenesis/degradation</keyword>
<keyword id="KW-0256">Endoplasmic reticulum</keyword>
<keyword id="KW-0472">Membrane</keyword>
<keyword id="KW-1185">Reference proteome</keyword>
<keyword id="KW-0812">Transmembrane</keyword>
<keyword id="KW-1133">Transmembrane helix</keyword>
<gene>
    <name type="primary">KEG1</name>
    <name type="ordered locus">YFR042W</name>
</gene>
<sequence>MAGIKLTHKLYQYYQLATSFLYAALLIRWLILMPLVGSRFLPGGIHEFLIYLMFYSSIMEVIWLLRFHGFKYGLLSRTFLKDLNFIYLVSVIHFYDDYEHALILKNASYSSFIISLSLSQAYCHWCKLFKRKGVKERTLVWKVNTFVTLPILYLSEFALLLLNIQVKNYHSTPTLDIINRVVLLAYFPVLLTAYKKLLTK</sequence>
<proteinExistence type="evidence at protein level"/>
<name>KEG1_YEAST</name>
<reference key="1">
    <citation type="journal article" date="2007" name="J. Biol. Chem.">
        <title>KEG1/YFR042w encodes a novel Kre6-binding endoplasmic reticulum membrane protein responsible for beta-1,6-glucan synthesis in Saccharomyces cerevisiae.</title>
        <authorList>
            <person name="Nakamata K."/>
            <person name="Kurita T."/>
            <person name="Bhuiyan M.S.A."/>
            <person name="Sato K."/>
            <person name="Noda Y."/>
            <person name="Yoda K."/>
        </authorList>
    </citation>
    <scope>NUCLEOTIDE SEQUENCE [GENOMIC DNA]</scope>
    <scope>GENE NAME</scope>
    <scope>FUNCTION</scope>
    <scope>INTERACTION WITH KRE6</scope>
    <scope>SUBCELLULAR LOCATION</scope>
    <scope>VARIANTS VAL-3; CYS-55 AND ASP-84</scope>
    <scope>MUTAGENESIS OF HIS-124</scope>
    <source>
        <strain>KA31a</strain>
    </source>
</reference>
<reference key="2">
    <citation type="journal article" date="1996" name="Yeast">
        <title>Analysis of a 36.2 kb DNA sequence including the right telomere of chromosome VI from Saccharomyces cerevisiae.</title>
        <authorList>
            <person name="Eki T."/>
            <person name="Naitou M."/>
            <person name="Hagiwara H."/>
            <person name="Ozawa M."/>
            <person name="Sasanuma S."/>
            <person name="Sasanuma M."/>
            <person name="Tsuchiya Y."/>
            <person name="Shibata T."/>
            <person name="Hanaoka F."/>
            <person name="Murakami Y."/>
        </authorList>
    </citation>
    <scope>NUCLEOTIDE SEQUENCE [GENOMIC DNA]</scope>
    <source>
        <strain>ATCC 204511 / S288c / AB972</strain>
    </source>
</reference>
<reference key="3">
    <citation type="journal article" date="1995" name="Nat. Genet.">
        <title>Analysis of the nucleotide sequence of chromosome VI from Saccharomyces cerevisiae.</title>
        <authorList>
            <person name="Murakami Y."/>
            <person name="Naitou M."/>
            <person name="Hagiwara H."/>
            <person name="Shibata T."/>
            <person name="Ozawa M."/>
            <person name="Sasanuma S."/>
            <person name="Sasanuma M."/>
            <person name="Tsuchiya Y."/>
            <person name="Soeda E."/>
            <person name="Yokoyama K."/>
            <person name="Yamazaki M."/>
            <person name="Tashiro H."/>
            <person name="Eki T."/>
        </authorList>
    </citation>
    <scope>NUCLEOTIDE SEQUENCE [LARGE SCALE GENOMIC DNA]</scope>
    <source>
        <strain>ATCC 204508 / S288c</strain>
    </source>
</reference>
<reference key="4">
    <citation type="journal article" date="2014" name="G3 (Bethesda)">
        <title>The reference genome sequence of Saccharomyces cerevisiae: Then and now.</title>
        <authorList>
            <person name="Engel S.R."/>
            <person name="Dietrich F.S."/>
            <person name="Fisk D.G."/>
            <person name="Binkley G."/>
            <person name="Balakrishnan R."/>
            <person name="Costanzo M.C."/>
            <person name="Dwight S.S."/>
            <person name="Hitz B.C."/>
            <person name="Karra K."/>
            <person name="Nash R.S."/>
            <person name="Weng S."/>
            <person name="Wong E.D."/>
            <person name="Lloyd P."/>
            <person name="Skrzypek M.S."/>
            <person name="Miyasato S.R."/>
            <person name="Simison M."/>
            <person name="Cherry J.M."/>
        </authorList>
    </citation>
    <scope>GENOME REANNOTATION</scope>
    <source>
        <strain>ATCC 204508 / S288c</strain>
    </source>
</reference>
<reference key="5">
    <citation type="journal article" date="2006" name="Proc. Natl. Acad. Sci. U.S.A.">
        <title>A global topology map of the Saccharomyces cerevisiae membrane proteome.</title>
        <authorList>
            <person name="Kim H."/>
            <person name="Melen K."/>
            <person name="Oesterberg M."/>
            <person name="von Heijne G."/>
        </authorList>
    </citation>
    <scope>TOPOLOGY [LARGE SCALE ANALYSIS]</scope>
    <source>
        <strain>ATCC 208353 / W303-1A</strain>
    </source>
</reference>
<reference key="6">
    <citation type="journal article" date="2008" name="Mol. Cell">
        <title>Toward a comprehensive temperature-sensitive mutant repository of the essential genes of Saccharomyces cerevisiae.</title>
        <authorList>
            <person name="Ben-Aroya S."/>
            <person name="Coombes C."/>
            <person name="Kwok T."/>
            <person name="O'Donnell K.A."/>
            <person name="Boeke J.D."/>
            <person name="Hieter P."/>
        </authorList>
    </citation>
    <scope>FUNCTION</scope>
</reference>
<feature type="chain" id="PRO_0000202695" description="Beta-1,6-glucan synthesis-associated protein KEG1">
    <location>
        <begin position="1"/>
        <end position="200"/>
    </location>
</feature>
<feature type="topological domain" description="Lumenal" evidence="1">
    <location>
        <begin position="1"/>
        <end position="15"/>
    </location>
</feature>
<feature type="transmembrane region" description="Helical" evidence="1">
    <location>
        <begin position="16"/>
        <end position="36"/>
    </location>
</feature>
<feature type="topological domain" description="Cytoplasmic" evidence="1">
    <location>
        <begin position="37"/>
        <end position="44"/>
    </location>
</feature>
<feature type="transmembrane region" description="Helical" evidence="1">
    <location>
        <begin position="45"/>
        <end position="65"/>
    </location>
</feature>
<feature type="topological domain" description="Lumenal" evidence="1">
    <location>
        <begin position="66"/>
        <end position="82"/>
    </location>
</feature>
<feature type="transmembrane region" description="Helical" evidence="1">
    <location>
        <begin position="83"/>
        <end position="103"/>
    </location>
</feature>
<feature type="topological domain" description="Cytoplasmic" evidence="1">
    <location>
        <begin position="104"/>
        <end position="145"/>
    </location>
</feature>
<feature type="transmembrane region" description="Helical" evidence="1">
    <location>
        <begin position="146"/>
        <end position="166"/>
    </location>
</feature>
<feature type="topological domain" description="Lumenal" evidence="1">
    <location>
        <begin position="167"/>
        <end position="173"/>
    </location>
</feature>
<feature type="transmembrane region" description="Helical" evidence="1">
    <location>
        <begin position="174"/>
        <end position="194"/>
    </location>
</feature>
<feature type="topological domain" description="Cytoplasmic" evidence="1">
    <location>
        <begin position="195"/>
        <end position="200"/>
    </location>
</feature>
<feature type="sequence variant" description="In strain: KA31a." evidence="2">
    <original>G</original>
    <variation>V</variation>
    <location>
        <position position="3"/>
    </location>
</feature>
<feature type="sequence variant" description="In strain: KA31a." evidence="2">
    <original>Y</original>
    <variation>C</variation>
    <location>
        <position position="55"/>
    </location>
</feature>
<feature type="sequence variant" description="In strain: KA31a." evidence="2">
    <original>N</original>
    <variation>D</variation>
    <location>
        <position position="84"/>
    </location>
</feature>
<feature type="mutagenesis site" description="In KEG1-1; temperature-sensitive. Increased sensitivity to chitin-binding dye Calcofluor white and zymolyase. Shows K1 killer toxin resistance, and reduced content of the cell wall beta-1,6-glucan." evidence="2">
    <original>H</original>
    <variation>L</variation>
    <location>
        <position position="124"/>
    </location>
</feature>
<organism>
    <name type="scientific">Saccharomyces cerevisiae (strain ATCC 204508 / S288c)</name>
    <name type="common">Baker's yeast</name>
    <dbReference type="NCBI Taxonomy" id="559292"/>
    <lineage>
        <taxon>Eukaryota</taxon>
        <taxon>Fungi</taxon>
        <taxon>Dikarya</taxon>
        <taxon>Ascomycota</taxon>
        <taxon>Saccharomycotina</taxon>
        <taxon>Saccharomycetes</taxon>
        <taxon>Saccharomycetales</taxon>
        <taxon>Saccharomycetaceae</taxon>
        <taxon>Saccharomyces</taxon>
    </lineage>
</organism>
<accession>P43614</accession>
<accession>A5A8M3</accession>
<accession>D6VTS5</accession>
<dbReference type="EMBL" id="AB303676">
    <property type="protein sequence ID" value="BAF62429.1"/>
    <property type="molecule type" value="Genomic_DNA"/>
</dbReference>
<dbReference type="EMBL" id="D50617">
    <property type="protein sequence ID" value="BAA09281.1"/>
    <property type="molecule type" value="Genomic_DNA"/>
</dbReference>
<dbReference type="EMBL" id="BK006940">
    <property type="protein sequence ID" value="DAA12485.1"/>
    <property type="molecule type" value="Genomic_DNA"/>
</dbReference>
<dbReference type="PIR" id="S56297">
    <property type="entry name" value="S56297"/>
</dbReference>
<dbReference type="RefSeq" id="NP_116700.1">
    <property type="nucleotide sequence ID" value="NM_001180007.1"/>
</dbReference>
<dbReference type="BioGRID" id="31200">
    <property type="interactions" value="235"/>
</dbReference>
<dbReference type="DIP" id="DIP-1849N"/>
<dbReference type="FunCoup" id="P43614">
    <property type="interactions" value="50"/>
</dbReference>
<dbReference type="IntAct" id="P43614">
    <property type="interactions" value="5"/>
</dbReference>
<dbReference type="MINT" id="P43614"/>
<dbReference type="STRING" id="4932.YFR042W"/>
<dbReference type="PaxDb" id="4932-YFR042W"/>
<dbReference type="PeptideAtlas" id="P43614"/>
<dbReference type="EnsemblFungi" id="YFR042W_mRNA">
    <property type="protein sequence ID" value="YFR042W"/>
    <property type="gene ID" value="YFR042W"/>
</dbReference>
<dbReference type="GeneID" id="850603"/>
<dbReference type="KEGG" id="sce:YFR042W"/>
<dbReference type="AGR" id="SGD:S000001938"/>
<dbReference type="SGD" id="S000001938">
    <property type="gene designation" value="KEG1"/>
</dbReference>
<dbReference type="VEuPathDB" id="FungiDB:YFR042W"/>
<dbReference type="eggNOG" id="ENOG502RXXA">
    <property type="taxonomic scope" value="Eukaryota"/>
</dbReference>
<dbReference type="HOGENOM" id="CLU_1367193_0_0_1"/>
<dbReference type="InParanoid" id="P43614"/>
<dbReference type="OMA" id="HFYDDYE"/>
<dbReference type="OrthoDB" id="46988at2759"/>
<dbReference type="BioCyc" id="YEAST:G3O-30489-MONOMER"/>
<dbReference type="BioGRID-ORCS" id="850603">
    <property type="hits" value="1 hit in 10 CRISPR screens"/>
</dbReference>
<dbReference type="PRO" id="PR:P43614"/>
<dbReference type="Proteomes" id="UP000002311">
    <property type="component" value="Chromosome VI"/>
</dbReference>
<dbReference type="RNAct" id="P43614">
    <property type="molecule type" value="protein"/>
</dbReference>
<dbReference type="GO" id="GO:0005783">
    <property type="term" value="C:endoplasmic reticulum"/>
    <property type="evidence" value="ECO:0007005"/>
    <property type="project" value="SGD"/>
</dbReference>
<dbReference type="GO" id="GO:0005789">
    <property type="term" value="C:endoplasmic reticulum membrane"/>
    <property type="evidence" value="ECO:0000314"/>
    <property type="project" value="SGD"/>
</dbReference>
<dbReference type="GO" id="GO:0006078">
    <property type="term" value="P:(1-&gt;6)-beta-D-glucan biosynthetic process"/>
    <property type="evidence" value="ECO:0000315"/>
    <property type="project" value="SGD"/>
</dbReference>
<dbReference type="GO" id="GO:0071555">
    <property type="term" value="P:cell wall organization"/>
    <property type="evidence" value="ECO:0007669"/>
    <property type="project" value="UniProtKB-KW"/>
</dbReference>
<dbReference type="GO" id="GO:0051276">
    <property type="term" value="P:chromosome organization"/>
    <property type="evidence" value="ECO:0000315"/>
    <property type="project" value="SGD"/>
</dbReference>
<evidence type="ECO:0000255" key="1"/>
<evidence type="ECO:0000269" key="2">
    <source>
    </source>
</evidence>
<evidence type="ECO:0000269" key="3">
    <source>
    </source>
</evidence>
<protein>
    <recommendedName>
        <fullName>Beta-1,6-glucan synthesis-associated protein KEG1</fullName>
    </recommendedName>
    <alternativeName>
        <fullName>KRE6-binding ER protein responsible for glucan synthesis protein 1</fullName>
    </alternativeName>
</protein>